<gene>
    <name type="primary">PATE2</name>
    <name type="synonym">C11orf38</name>
    <name type="ORF">UNQ3112/PRO10144</name>
</gene>
<proteinExistence type="evidence at protein level"/>
<reference key="1">
    <citation type="journal article" date="2003" name="Genome Res.">
        <title>The secreted protein discovery initiative (SPDI), a large-scale effort to identify novel human secreted and transmembrane proteins: a bioinformatics assessment.</title>
        <authorList>
            <person name="Clark H.F."/>
            <person name="Gurney A.L."/>
            <person name="Abaya E."/>
            <person name="Baker K."/>
            <person name="Baldwin D.T."/>
            <person name="Brush J."/>
            <person name="Chen J."/>
            <person name="Chow B."/>
            <person name="Chui C."/>
            <person name="Crowley C."/>
            <person name="Currell B."/>
            <person name="Deuel B."/>
            <person name="Dowd P."/>
            <person name="Eaton D."/>
            <person name="Foster J.S."/>
            <person name="Grimaldi C."/>
            <person name="Gu Q."/>
            <person name="Hass P.E."/>
            <person name="Heldens S."/>
            <person name="Huang A."/>
            <person name="Kim H.S."/>
            <person name="Klimowski L."/>
            <person name="Jin Y."/>
            <person name="Johnson S."/>
            <person name="Lee J."/>
            <person name="Lewis L."/>
            <person name="Liao D."/>
            <person name="Mark M.R."/>
            <person name="Robbie E."/>
            <person name="Sanchez C."/>
            <person name="Schoenfeld J."/>
            <person name="Seshagiri S."/>
            <person name="Simmons L."/>
            <person name="Singh J."/>
            <person name="Smith V."/>
            <person name="Stinson J."/>
            <person name="Vagts A."/>
            <person name="Vandlen R.L."/>
            <person name="Watanabe C."/>
            <person name="Wieand D."/>
            <person name="Woods K."/>
            <person name="Xie M.-H."/>
            <person name="Yansura D.G."/>
            <person name="Yi S."/>
            <person name="Yu G."/>
            <person name="Yuan J."/>
            <person name="Zhang M."/>
            <person name="Zhang Z."/>
            <person name="Goddard A.D."/>
            <person name="Wood W.I."/>
            <person name="Godowski P.J."/>
            <person name="Gray A.M."/>
        </authorList>
    </citation>
    <scope>NUCLEOTIDE SEQUENCE [LARGE SCALE MRNA] (ISOFORM 1)</scope>
</reference>
<reference key="2">
    <citation type="journal article" date="2006" name="Nature">
        <title>Human chromosome 11 DNA sequence and analysis including novel gene identification.</title>
        <authorList>
            <person name="Taylor T.D."/>
            <person name="Noguchi H."/>
            <person name="Totoki Y."/>
            <person name="Toyoda A."/>
            <person name="Kuroki Y."/>
            <person name="Dewar K."/>
            <person name="Lloyd C."/>
            <person name="Itoh T."/>
            <person name="Takeda T."/>
            <person name="Kim D.-W."/>
            <person name="She X."/>
            <person name="Barlow K.F."/>
            <person name="Bloom T."/>
            <person name="Bruford E."/>
            <person name="Chang J.L."/>
            <person name="Cuomo C.A."/>
            <person name="Eichler E."/>
            <person name="FitzGerald M.G."/>
            <person name="Jaffe D.B."/>
            <person name="LaButti K."/>
            <person name="Nicol R."/>
            <person name="Park H.-S."/>
            <person name="Seaman C."/>
            <person name="Sougnez C."/>
            <person name="Yang X."/>
            <person name="Zimmer A.R."/>
            <person name="Zody M.C."/>
            <person name="Birren B.W."/>
            <person name="Nusbaum C."/>
            <person name="Fujiyama A."/>
            <person name="Hattori M."/>
            <person name="Rogers J."/>
            <person name="Lander E.S."/>
            <person name="Sakaki Y."/>
        </authorList>
    </citation>
    <scope>NUCLEOTIDE SEQUENCE [LARGE SCALE GENOMIC DNA]</scope>
</reference>
<reference key="3">
    <citation type="submission" date="2005-07" db="EMBL/GenBank/DDBJ databases">
        <authorList>
            <person name="Mural R.J."/>
            <person name="Istrail S."/>
            <person name="Sutton G.G."/>
            <person name="Florea L."/>
            <person name="Halpern A.L."/>
            <person name="Mobarry C.M."/>
            <person name="Lippert R."/>
            <person name="Walenz B."/>
            <person name="Shatkay H."/>
            <person name="Dew I."/>
            <person name="Miller J.R."/>
            <person name="Flanigan M.J."/>
            <person name="Edwards N.J."/>
            <person name="Bolanos R."/>
            <person name="Fasulo D."/>
            <person name="Halldorsson B.V."/>
            <person name="Hannenhalli S."/>
            <person name="Turner R."/>
            <person name="Yooseph S."/>
            <person name="Lu F."/>
            <person name="Nusskern D.R."/>
            <person name="Shue B.C."/>
            <person name="Zheng X.H."/>
            <person name="Zhong F."/>
            <person name="Delcher A.L."/>
            <person name="Huson D.H."/>
            <person name="Kravitz S.A."/>
            <person name="Mouchard L."/>
            <person name="Reinert K."/>
            <person name="Remington K.A."/>
            <person name="Clark A.G."/>
            <person name="Waterman M.S."/>
            <person name="Eichler E.E."/>
            <person name="Adams M.D."/>
            <person name="Hunkapiller M.W."/>
            <person name="Myers E.W."/>
            <person name="Venter J.C."/>
        </authorList>
    </citation>
    <scope>NUCLEOTIDE SEQUENCE [LARGE SCALE GENOMIC DNA]</scope>
</reference>
<reference key="4">
    <citation type="journal article" date="2004" name="Genome Res.">
        <title>The status, quality, and expansion of the NIH full-length cDNA project: the Mammalian Gene Collection (MGC).</title>
        <authorList>
            <consortium name="The MGC Project Team"/>
        </authorList>
    </citation>
    <scope>NUCLEOTIDE SEQUENCE [LARGE SCALE MRNA] (ISOFORMS 1 AND 2)</scope>
</reference>
<reference key="5">
    <citation type="journal article" date="2008" name="J. Biol. Chem.">
        <title>PATE gene clusters code for multiple, secreted TFP/Ly-6/uPAR proteins that are expressed in reproductive and neuron-rich tissues and possess neuromodulatory activity.</title>
        <authorList>
            <person name="Levitin F."/>
            <person name="Weiss M."/>
            <person name="Hahn Y."/>
            <person name="Stern O."/>
            <person name="Papke R.L."/>
            <person name="Matusik R."/>
            <person name="Nandana S.R."/>
            <person name="Ziv R."/>
            <person name="Pichinuk E."/>
            <person name="Salame S."/>
            <person name="Bera T."/>
            <person name="Vincent J."/>
            <person name="Lee B."/>
            <person name="Pastan I."/>
            <person name="Wreschner D.H."/>
        </authorList>
    </citation>
    <scope>TISSUE SPECIFICITY</scope>
    <scope>ALTERNATIVE SPLICING (ISOFORM 2)</scope>
</reference>
<evidence type="ECO:0000255" key="1"/>
<evidence type="ECO:0000269" key="2">
    <source>
    </source>
</evidence>
<evidence type="ECO:0000303" key="3">
    <source>
    </source>
</evidence>
<evidence type="ECO:0000305" key="4"/>
<comment type="subcellular location">
    <subcellularLocation>
        <location evidence="4">Secreted</location>
    </subcellularLocation>
</comment>
<comment type="alternative products">
    <event type="alternative splicing"/>
    <isoform>
        <id>Q6UY27-1</id>
        <name>1</name>
        <sequence type="displayed"/>
    </isoform>
    <isoform>
        <id>Q6UY27-2</id>
        <name>2</name>
        <sequence type="described" ref="VSP_035810"/>
    </isoform>
</comment>
<comment type="tissue specificity">
    <text evidence="2">Isoform 1 and isoform 2 are expressed in prostate and testis. Isoform 2 is expressed in male and female brain at equivalent levels, in particular in cerebellum, cerebral cortex, corpus callosum, occipital, parrietal and temporal lobes, and pons, but not in amygdala, cerebral peduncle, hippocampus and thalamus.</text>
</comment>
<comment type="similarity">
    <text evidence="4">Belongs to the PATE family.</text>
</comment>
<keyword id="KW-0025">Alternative splicing</keyword>
<keyword id="KW-1015">Disulfide bond</keyword>
<keyword id="KW-1267">Proteomics identification</keyword>
<keyword id="KW-1185">Reference proteome</keyword>
<keyword id="KW-0964">Secreted</keyword>
<keyword id="KW-0732">Signal</keyword>
<sequence length="113" mass="13015">MLVLFLLGTVFLLCPYWGELHDPIKATEIMCYECKKYHLGLCYGVMTSCSLKHKQSCAVENFYILTRKGQSMYHYSKLSCMTSCEDINFLGFTKRVELICCDHSNYCNLPEGV</sequence>
<accession>Q6UY27</accession>
<accession>B2RNZ2</accession>
<accession>B7ZMG4</accession>
<protein>
    <recommendedName>
        <fullName>Prostate and testis expressed protein 2</fullName>
    </recommendedName>
    <alternativeName>
        <fullName>PATE-like protein M</fullName>
        <shortName>PATE-M</shortName>
    </alternativeName>
</protein>
<dbReference type="EMBL" id="AY358105">
    <property type="protein sequence ID" value="AAQ88472.1"/>
    <property type="molecule type" value="mRNA"/>
</dbReference>
<dbReference type="EMBL" id="AP003087">
    <property type="status" value="NOT_ANNOTATED_CDS"/>
    <property type="molecule type" value="Genomic_DNA"/>
</dbReference>
<dbReference type="EMBL" id="CH471065">
    <property type="protein sequence ID" value="EAW67663.1"/>
    <property type="molecule type" value="Genomic_DNA"/>
</dbReference>
<dbReference type="EMBL" id="BC137190">
    <property type="protein sequence ID" value="AAI37191.1"/>
    <property type="molecule type" value="mRNA"/>
</dbReference>
<dbReference type="EMBL" id="BC137193">
    <property type="protein sequence ID" value="AAI37194.1"/>
    <property type="molecule type" value="mRNA"/>
</dbReference>
<dbReference type="EMBL" id="BC144526">
    <property type="protein sequence ID" value="AAI44527.1"/>
    <property type="molecule type" value="mRNA"/>
</dbReference>
<dbReference type="CCDS" id="CCDS8465.1">
    <molecule id="Q6UY27-1"/>
</dbReference>
<dbReference type="RefSeq" id="NP_997720.1">
    <molecule id="Q6UY27-1"/>
    <property type="nucleotide sequence ID" value="NM_212555.3"/>
</dbReference>
<dbReference type="SMR" id="Q6UY27"/>
<dbReference type="BioGRID" id="134470">
    <property type="interactions" value="56"/>
</dbReference>
<dbReference type="FunCoup" id="Q6UY27">
    <property type="interactions" value="415"/>
</dbReference>
<dbReference type="IntAct" id="Q6UY27">
    <property type="interactions" value="4"/>
</dbReference>
<dbReference type="STRING" id="9606.ENSP00000351325"/>
<dbReference type="iPTMnet" id="Q6UY27"/>
<dbReference type="PhosphoSitePlus" id="Q6UY27"/>
<dbReference type="BioMuta" id="PATE2"/>
<dbReference type="DMDM" id="74738311"/>
<dbReference type="MassIVE" id="Q6UY27"/>
<dbReference type="PaxDb" id="9606-ENSP00000351325"/>
<dbReference type="PeptideAtlas" id="Q6UY27"/>
<dbReference type="ProteomicsDB" id="67696">
    <molecule id="Q6UY27-1"/>
</dbReference>
<dbReference type="ProteomicsDB" id="67697">
    <molecule id="Q6UY27-2"/>
</dbReference>
<dbReference type="DNASU" id="399967"/>
<dbReference type="Ensembl" id="ENST00000358524.8">
    <molecule id="Q6UY27-1"/>
    <property type="protein sequence ID" value="ENSP00000351325.3"/>
    <property type="gene ID" value="ENSG00000196844.9"/>
</dbReference>
<dbReference type="Ensembl" id="ENST00000436890.2">
    <molecule id="Q6UY27-2"/>
    <property type="protein sequence ID" value="ENSP00000414895.2"/>
    <property type="gene ID" value="ENSG00000196844.9"/>
</dbReference>
<dbReference type="GeneID" id="399967"/>
<dbReference type="KEGG" id="hsa:399967"/>
<dbReference type="MANE-Select" id="ENST00000358524.8">
    <property type="protein sequence ID" value="ENSP00000351325.3"/>
    <property type="RefSeq nucleotide sequence ID" value="NM_212555.3"/>
    <property type="RefSeq protein sequence ID" value="NP_997720.1"/>
</dbReference>
<dbReference type="UCSC" id="uc001qcu.5">
    <molecule id="Q6UY27-1"/>
    <property type="organism name" value="human"/>
</dbReference>
<dbReference type="AGR" id="HGNC:32249"/>
<dbReference type="CTD" id="399967"/>
<dbReference type="GeneCards" id="PATE2"/>
<dbReference type="HGNC" id="HGNC:32249">
    <property type="gene designation" value="PATE2"/>
</dbReference>
<dbReference type="HPA" id="ENSG00000196844">
    <property type="expression patterns" value="Tissue enriched (epididymis)"/>
</dbReference>
<dbReference type="neXtProt" id="NX_Q6UY27"/>
<dbReference type="OpenTargets" id="ENSG00000196844"/>
<dbReference type="PharmGKB" id="PA164724383"/>
<dbReference type="VEuPathDB" id="HostDB:ENSG00000196844"/>
<dbReference type="eggNOG" id="ENOG502TEE7">
    <property type="taxonomic scope" value="Eukaryota"/>
</dbReference>
<dbReference type="GeneTree" id="ENSGT00510000048956"/>
<dbReference type="HOGENOM" id="CLU_171487_1_0_1"/>
<dbReference type="InParanoid" id="Q6UY27"/>
<dbReference type="OMA" id="LKHKQSC"/>
<dbReference type="OrthoDB" id="9829427at2759"/>
<dbReference type="PAN-GO" id="Q6UY27">
    <property type="GO annotations" value="1 GO annotation based on evolutionary models"/>
</dbReference>
<dbReference type="PhylomeDB" id="Q6UY27"/>
<dbReference type="TreeFam" id="TF339601"/>
<dbReference type="PathwayCommons" id="Q6UY27"/>
<dbReference type="BioGRID-ORCS" id="399967">
    <property type="hits" value="5 hits in 1137 CRISPR screens"/>
</dbReference>
<dbReference type="GenomeRNAi" id="399967"/>
<dbReference type="Pharos" id="Q6UY27">
    <property type="development level" value="Tdark"/>
</dbReference>
<dbReference type="PRO" id="PR:Q6UY27"/>
<dbReference type="Proteomes" id="UP000005640">
    <property type="component" value="Chromosome 11"/>
</dbReference>
<dbReference type="RNAct" id="Q6UY27">
    <property type="molecule type" value="protein"/>
</dbReference>
<dbReference type="Bgee" id="ENSG00000196844">
    <property type="expression patterns" value="Expressed in corpus epididymis and 45 other cell types or tissues"/>
</dbReference>
<dbReference type="GO" id="GO:0005615">
    <property type="term" value="C:extracellular space"/>
    <property type="evidence" value="ECO:0000314"/>
    <property type="project" value="MGI"/>
</dbReference>
<dbReference type="CDD" id="cd23578">
    <property type="entry name" value="TFP_LU_ECD_PATE2"/>
    <property type="match status" value="1"/>
</dbReference>
<dbReference type="InterPro" id="IPR016054">
    <property type="entry name" value="LY6_UPA_recep-like"/>
</dbReference>
<dbReference type="InterPro" id="IPR029691">
    <property type="entry name" value="PATE2"/>
</dbReference>
<dbReference type="PANTHER" id="PTHR47884">
    <property type="entry name" value="PROSTATE AND TESTIS EXPRESSED PROTEIN 2"/>
    <property type="match status" value="1"/>
</dbReference>
<dbReference type="PANTHER" id="PTHR47884:SF1">
    <property type="entry name" value="PROSTATE AND TESTIS EXPRESSED PROTEIN 2"/>
    <property type="match status" value="1"/>
</dbReference>
<dbReference type="Pfam" id="PF00021">
    <property type="entry name" value="UPAR_LY6"/>
    <property type="match status" value="1"/>
</dbReference>
<name>PATE2_HUMAN</name>
<feature type="signal peptide" evidence="1">
    <location>
        <begin position="1"/>
        <end position="26"/>
    </location>
</feature>
<feature type="chain" id="PRO_0000263607" description="Prostate and testis expressed protein 2">
    <location>
        <begin position="27"/>
        <end position="113"/>
    </location>
</feature>
<feature type="domain" description="UPAR/Ly6" evidence="4">
    <location>
        <begin position="29"/>
        <end position="110"/>
    </location>
</feature>
<feature type="disulfide bond" evidence="1">
    <location>
        <begin position="31"/>
        <end position="57"/>
    </location>
</feature>
<feature type="disulfide bond" evidence="1">
    <location>
        <begin position="34"/>
        <end position="42"/>
    </location>
</feature>
<feature type="disulfide bond" evidence="1">
    <location>
        <begin position="49"/>
        <end position="80"/>
    </location>
</feature>
<feature type="disulfide bond" evidence="1">
    <location>
        <begin position="84"/>
        <end position="101"/>
    </location>
</feature>
<feature type="splice variant" id="VSP_035810" description="In isoform 2." evidence="3">
    <location>
        <begin position="26"/>
        <end position="68"/>
    </location>
</feature>
<organism>
    <name type="scientific">Homo sapiens</name>
    <name type="common">Human</name>
    <dbReference type="NCBI Taxonomy" id="9606"/>
    <lineage>
        <taxon>Eukaryota</taxon>
        <taxon>Metazoa</taxon>
        <taxon>Chordata</taxon>
        <taxon>Craniata</taxon>
        <taxon>Vertebrata</taxon>
        <taxon>Euteleostomi</taxon>
        <taxon>Mammalia</taxon>
        <taxon>Eutheria</taxon>
        <taxon>Euarchontoglires</taxon>
        <taxon>Primates</taxon>
        <taxon>Haplorrhini</taxon>
        <taxon>Catarrhini</taxon>
        <taxon>Hominidae</taxon>
        <taxon>Homo</taxon>
    </lineage>
</organism>